<protein>
    <recommendedName>
        <fullName>Putative 2-aminoethylphosphonate transport system permease protein PhnV</fullName>
    </recommendedName>
</protein>
<keyword id="KW-0997">Cell inner membrane</keyword>
<keyword id="KW-1003">Cell membrane</keyword>
<keyword id="KW-0472">Membrane</keyword>
<keyword id="KW-0812">Transmembrane</keyword>
<keyword id="KW-1133">Transmembrane helix</keyword>
<keyword id="KW-0813">Transport</keyword>
<name>PHNV_SALTI</name>
<feature type="chain" id="PRO_0000286749" description="Putative 2-aminoethylphosphonate transport system permease protein PhnV">
    <location>
        <begin position="1"/>
        <end position="263"/>
    </location>
</feature>
<feature type="transmembrane region" description="Helical" evidence="2">
    <location>
        <begin position="13"/>
        <end position="33"/>
    </location>
</feature>
<feature type="transmembrane region" description="Helical" evidence="2">
    <location>
        <begin position="69"/>
        <end position="89"/>
    </location>
</feature>
<feature type="transmembrane region" description="Helical" evidence="2">
    <location>
        <begin position="104"/>
        <end position="124"/>
    </location>
</feature>
<feature type="transmembrane region" description="Helical" evidence="2">
    <location>
        <begin position="131"/>
        <end position="151"/>
    </location>
</feature>
<feature type="transmembrane region" description="Helical" evidence="2">
    <location>
        <begin position="185"/>
        <end position="205"/>
    </location>
</feature>
<feature type="transmembrane region" description="Helical" evidence="2">
    <location>
        <begin position="233"/>
        <end position="253"/>
    </location>
</feature>
<feature type="domain" description="ABC transmembrane type-1" evidence="2">
    <location>
        <begin position="65"/>
        <end position="253"/>
    </location>
</feature>
<sequence>MLIWSPKGRAAAGVVASVLFIVFFFLPLAVILMSSLSQRWNGILPSGFTLNHFVNALHGAAWDALLASLTIGFCASLFALLCGVWAALALRQYGVKTQKWLSMVFYLPSAIPSVSVGLGILVAFSQGPLQMNGTLWIVLTAHFVLISAFTFSNVSTGLARISADIENVASSLGASPWYRLRHVTLPLLMPWMVSELALSLSLSMGELGATVMIYPPGWTTLPVAIFSLTDRGNIADGAALTIVLVAITLLLMMKLERIAKRLG</sequence>
<proteinExistence type="inferred from homology"/>
<dbReference type="EMBL" id="AL513382">
    <property type="protein sequence ID" value="CAD08882.1"/>
    <property type="molecule type" value="Genomic_DNA"/>
</dbReference>
<dbReference type="EMBL" id="AE014613">
    <property type="protein sequence ID" value="AAO70027.1"/>
    <property type="molecule type" value="Genomic_DNA"/>
</dbReference>
<dbReference type="RefSeq" id="NP_455020.1">
    <property type="nucleotide sequence ID" value="NC_003198.1"/>
</dbReference>
<dbReference type="RefSeq" id="WP_000909802.1">
    <property type="nucleotide sequence ID" value="NZ_WSUR01000026.1"/>
</dbReference>
<dbReference type="SMR" id="Q8Z8X0"/>
<dbReference type="STRING" id="220341.gene:17584487"/>
<dbReference type="KEGG" id="stt:t2437"/>
<dbReference type="KEGG" id="sty:STY0465"/>
<dbReference type="PATRIC" id="fig|220341.7.peg.466"/>
<dbReference type="eggNOG" id="COG1177">
    <property type="taxonomic scope" value="Bacteria"/>
</dbReference>
<dbReference type="HOGENOM" id="CLU_016047_3_2_6"/>
<dbReference type="OMA" id="LGGTKWI"/>
<dbReference type="OrthoDB" id="9815533at2"/>
<dbReference type="Proteomes" id="UP000000541">
    <property type="component" value="Chromosome"/>
</dbReference>
<dbReference type="Proteomes" id="UP000002670">
    <property type="component" value="Chromosome"/>
</dbReference>
<dbReference type="GO" id="GO:0005886">
    <property type="term" value="C:plasma membrane"/>
    <property type="evidence" value="ECO:0007669"/>
    <property type="project" value="UniProtKB-SubCell"/>
</dbReference>
<dbReference type="GO" id="GO:0055085">
    <property type="term" value="P:transmembrane transport"/>
    <property type="evidence" value="ECO:0007669"/>
    <property type="project" value="InterPro"/>
</dbReference>
<dbReference type="CDD" id="cd06261">
    <property type="entry name" value="TM_PBP2"/>
    <property type="match status" value="1"/>
</dbReference>
<dbReference type="FunFam" id="1.10.3720.10:FF:000081">
    <property type="entry name" value="2-aminoethylphosphonate ABC transport system, membrane component PhnV"/>
    <property type="match status" value="1"/>
</dbReference>
<dbReference type="Gene3D" id="1.10.3720.10">
    <property type="entry name" value="MetI-like"/>
    <property type="match status" value="1"/>
</dbReference>
<dbReference type="InterPro" id="IPR017661">
    <property type="entry name" value="AminoethylPonate_ABC_PhnV"/>
</dbReference>
<dbReference type="InterPro" id="IPR000515">
    <property type="entry name" value="MetI-like"/>
</dbReference>
<dbReference type="InterPro" id="IPR035906">
    <property type="entry name" value="MetI-like_sf"/>
</dbReference>
<dbReference type="NCBIfam" id="TIGR03255">
    <property type="entry name" value="PhnV"/>
    <property type="match status" value="1"/>
</dbReference>
<dbReference type="PANTHER" id="PTHR43357">
    <property type="entry name" value="INNER MEMBRANE ABC TRANSPORTER PERMEASE PROTEIN YDCV"/>
    <property type="match status" value="1"/>
</dbReference>
<dbReference type="PANTHER" id="PTHR43357:SF4">
    <property type="entry name" value="INNER MEMBRANE ABC TRANSPORTER PERMEASE PROTEIN YDCV"/>
    <property type="match status" value="1"/>
</dbReference>
<dbReference type="Pfam" id="PF00528">
    <property type="entry name" value="BPD_transp_1"/>
    <property type="match status" value="1"/>
</dbReference>
<dbReference type="SUPFAM" id="SSF161098">
    <property type="entry name" value="MetI-like"/>
    <property type="match status" value="1"/>
</dbReference>
<dbReference type="PROSITE" id="PS50928">
    <property type="entry name" value="ABC_TM1"/>
    <property type="match status" value="1"/>
</dbReference>
<comment type="function">
    <text evidence="1">Probably part of the PhnSTUV complex (TC 3.A.1.11.5) involved in 2-aminoethylphosphonate import. Probably responsible for the translocation of the substrate across the membrane (By similarity).</text>
</comment>
<comment type="subcellular location">
    <subcellularLocation>
        <location evidence="3">Cell inner membrane</location>
        <topology evidence="2">Multi-pass membrane protein</topology>
    </subcellularLocation>
</comment>
<comment type="similarity">
    <text evidence="3">Belongs to the binding-protein-dependent transport system permease family.</text>
</comment>
<evidence type="ECO:0000250" key="1"/>
<evidence type="ECO:0000255" key="2">
    <source>
        <dbReference type="PROSITE-ProRule" id="PRU00441"/>
    </source>
</evidence>
<evidence type="ECO:0000305" key="3"/>
<accession>Q8Z8X0</accession>
<accession>Q7C877</accession>
<gene>
    <name type="primary">phnV</name>
    <name type="ordered locus">STY0465</name>
    <name type="ordered locus">t2437</name>
</gene>
<organism>
    <name type="scientific">Salmonella typhi</name>
    <dbReference type="NCBI Taxonomy" id="90370"/>
    <lineage>
        <taxon>Bacteria</taxon>
        <taxon>Pseudomonadati</taxon>
        <taxon>Pseudomonadota</taxon>
        <taxon>Gammaproteobacteria</taxon>
        <taxon>Enterobacterales</taxon>
        <taxon>Enterobacteriaceae</taxon>
        <taxon>Salmonella</taxon>
    </lineage>
</organism>
<reference key="1">
    <citation type="journal article" date="2001" name="Nature">
        <title>Complete genome sequence of a multiple drug resistant Salmonella enterica serovar Typhi CT18.</title>
        <authorList>
            <person name="Parkhill J."/>
            <person name="Dougan G."/>
            <person name="James K.D."/>
            <person name="Thomson N.R."/>
            <person name="Pickard D."/>
            <person name="Wain J."/>
            <person name="Churcher C.M."/>
            <person name="Mungall K.L."/>
            <person name="Bentley S.D."/>
            <person name="Holden M.T.G."/>
            <person name="Sebaihia M."/>
            <person name="Baker S."/>
            <person name="Basham D."/>
            <person name="Brooks K."/>
            <person name="Chillingworth T."/>
            <person name="Connerton P."/>
            <person name="Cronin A."/>
            <person name="Davis P."/>
            <person name="Davies R.M."/>
            <person name="Dowd L."/>
            <person name="White N."/>
            <person name="Farrar J."/>
            <person name="Feltwell T."/>
            <person name="Hamlin N."/>
            <person name="Haque A."/>
            <person name="Hien T.T."/>
            <person name="Holroyd S."/>
            <person name="Jagels K."/>
            <person name="Krogh A."/>
            <person name="Larsen T.S."/>
            <person name="Leather S."/>
            <person name="Moule S."/>
            <person name="O'Gaora P."/>
            <person name="Parry C."/>
            <person name="Quail M.A."/>
            <person name="Rutherford K.M."/>
            <person name="Simmonds M."/>
            <person name="Skelton J."/>
            <person name="Stevens K."/>
            <person name="Whitehead S."/>
            <person name="Barrell B.G."/>
        </authorList>
    </citation>
    <scope>NUCLEOTIDE SEQUENCE [LARGE SCALE GENOMIC DNA]</scope>
    <source>
        <strain>CT18</strain>
    </source>
</reference>
<reference key="2">
    <citation type="journal article" date="2003" name="J. Bacteriol.">
        <title>Comparative genomics of Salmonella enterica serovar Typhi strains Ty2 and CT18.</title>
        <authorList>
            <person name="Deng W."/>
            <person name="Liou S.-R."/>
            <person name="Plunkett G. III"/>
            <person name="Mayhew G.F."/>
            <person name="Rose D.J."/>
            <person name="Burland V."/>
            <person name="Kodoyianni V."/>
            <person name="Schwartz D.C."/>
            <person name="Blattner F.R."/>
        </authorList>
    </citation>
    <scope>NUCLEOTIDE SEQUENCE [LARGE SCALE GENOMIC DNA]</scope>
    <source>
        <strain>ATCC 700931 / Ty2</strain>
    </source>
</reference>